<protein>
    <recommendedName>
        <fullName evidence="1">Large ribosomal subunit protein uL2</fullName>
    </recommendedName>
    <alternativeName>
        <fullName evidence="3">50S ribosomal protein L2</fullName>
    </alternativeName>
</protein>
<name>RL2_SALCH</name>
<gene>
    <name evidence="1" type="primary">rplB</name>
    <name type="ordered locus">SCH_3371</name>
</gene>
<sequence>MAVVKCKPTSPGRRHVVKVVNPELHKGKPFAPLVEKNSKSGGRNNNGRITTRHIGGGHKQAYRIVDFKRNKDGIPAVVERLEYDPNRSANIALVLYKDGERRYILAPKGLKAGDQIQSGVDAAIKAGNTLPMRNIPVGSTVHNVEMKPGKGGQLARSAGTYVQIVARDGAYVTLRLRSGEMRKVEADCRATLGEVGNAEHMLRVLGKAGAARWRGVRPTVRGTAMNPVDHPHGGGEGRNFGKHPVTPWGVQTKGKKTRSNKRTDKFIVRRRSK</sequence>
<evidence type="ECO:0000255" key="1">
    <source>
        <dbReference type="HAMAP-Rule" id="MF_01320"/>
    </source>
</evidence>
<evidence type="ECO:0000256" key="2">
    <source>
        <dbReference type="SAM" id="MobiDB-lite"/>
    </source>
</evidence>
<evidence type="ECO:0000305" key="3"/>
<accession>Q57J35</accession>
<comment type="function">
    <text evidence="1">One of the primary rRNA binding proteins. Required for association of the 30S and 50S subunits to form the 70S ribosome, for tRNA binding and peptide bond formation. It has been suggested to have peptidyltransferase activity; this is somewhat controversial. Makes several contacts with the 16S rRNA in the 70S ribosome.</text>
</comment>
<comment type="subunit">
    <text evidence="1">Part of the 50S ribosomal subunit. Forms a bridge to the 30S subunit in the 70S ribosome.</text>
</comment>
<comment type="similarity">
    <text evidence="1">Belongs to the universal ribosomal protein uL2 family.</text>
</comment>
<reference key="1">
    <citation type="journal article" date="2005" name="Nucleic Acids Res.">
        <title>The genome sequence of Salmonella enterica serovar Choleraesuis, a highly invasive and resistant zoonotic pathogen.</title>
        <authorList>
            <person name="Chiu C.-H."/>
            <person name="Tang P."/>
            <person name="Chu C."/>
            <person name="Hu S."/>
            <person name="Bao Q."/>
            <person name="Yu J."/>
            <person name="Chou Y.-Y."/>
            <person name="Wang H.-S."/>
            <person name="Lee Y.-S."/>
        </authorList>
    </citation>
    <scope>NUCLEOTIDE SEQUENCE [LARGE SCALE GENOMIC DNA]</scope>
    <source>
        <strain>SC-B67</strain>
    </source>
</reference>
<keyword id="KW-0687">Ribonucleoprotein</keyword>
<keyword id="KW-0689">Ribosomal protein</keyword>
<keyword id="KW-0694">RNA-binding</keyword>
<keyword id="KW-0699">rRNA-binding</keyword>
<organism>
    <name type="scientific">Salmonella choleraesuis (strain SC-B67)</name>
    <dbReference type="NCBI Taxonomy" id="321314"/>
    <lineage>
        <taxon>Bacteria</taxon>
        <taxon>Pseudomonadati</taxon>
        <taxon>Pseudomonadota</taxon>
        <taxon>Gammaproteobacteria</taxon>
        <taxon>Enterobacterales</taxon>
        <taxon>Enterobacteriaceae</taxon>
        <taxon>Salmonella</taxon>
    </lineage>
</organism>
<proteinExistence type="inferred from homology"/>
<dbReference type="EMBL" id="AE017220">
    <property type="protein sequence ID" value="AAX67277.1"/>
    <property type="molecule type" value="Genomic_DNA"/>
</dbReference>
<dbReference type="RefSeq" id="WP_000301869.1">
    <property type="nucleotide sequence ID" value="NC_006905.1"/>
</dbReference>
<dbReference type="SMR" id="Q57J35"/>
<dbReference type="GeneID" id="97393170"/>
<dbReference type="KEGG" id="sec:SCH_3371"/>
<dbReference type="HOGENOM" id="CLU_036235_2_1_6"/>
<dbReference type="Proteomes" id="UP000000538">
    <property type="component" value="Chromosome"/>
</dbReference>
<dbReference type="GO" id="GO:0005829">
    <property type="term" value="C:cytosol"/>
    <property type="evidence" value="ECO:0007669"/>
    <property type="project" value="UniProtKB-ARBA"/>
</dbReference>
<dbReference type="GO" id="GO:0015934">
    <property type="term" value="C:large ribosomal subunit"/>
    <property type="evidence" value="ECO:0007669"/>
    <property type="project" value="InterPro"/>
</dbReference>
<dbReference type="GO" id="GO:0019843">
    <property type="term" value="F:rRNA binding"/>
    <property type="evidence" value="ECO:0007669"/>
    <property type="project" value="UniProtKB-UniRule"/>
</dbReference>
<dbReference type="GO" id="GO:0003735">
    <property type="term" value="F:structural constituent of ribosome"/>
    <property type="evidence" value="ECO:0007669"/>
    <property type="project" value="InterPro"/>
</dbReference>
<dbReference type="GO" id="GO:0016740">
    <property type="term" value="F:transferase activity"/>
    <property type="evidence" value="ECO:0007669"/>
    <property type="project" value="InterPro"/>
</dbReference>
<dbReference type="GO" id="GO:0002181">
    <property type="term" value="P:cytoplasmic translation"/>
    <property type="evidence" value="ECO:0007669"/>
    <property type="project" value="TreeGrafter"/>
</dbReference>
<dbReference type="FunFam" id="2.30.30.30:FF:000001">
    <property type="entry name" value="50S ribosomal protein L2"/>
    <property type="match status" value="1"/>
</dbReference>
<dbReference type="FunFam" id="2.40.50.140:FF:000003">
    <property type="entry name" value="50S ribosomal protein L2"/>
    <property type="match status" value="1"/>
</dbReference>
<dbReference type="FunFam" id="4.10.950.10:FF:000001">
    <property type="entry name" value="50S ribosomal protein L2"/>
    <property type="match status" value="1"/>
</dbReference>
<dbReference type="Gene3D" id="2.30.30.30">
    <property type="match status" value="1"/>
</dbReference>
<dbReference type="Gene3D" id="2.40.50.140">
    <property type="entry name" value="Nucleic acid-binding proteins"/>
    <property type="match status" value="1"/>
</dbReference>
<dbReference type="Gene3D" id="4.10.950.10">
    <property type="entry name" value="Ribosomal protein L2, domain 3"/>
    <property type="match status" value="1"/>
</dbReference>
<dbReference type="HAMAP" id="MF_01320_B">
    <property type="entry name" value="Ribosomal_uL2_B"/>
    <property type="match status" value="1"/>
</dbReference>
<dbReference type="InterPro" id="IPR012340">
    <property type="entry name" value="NA-bd_OB-fold"/>
</dbReference>
<dbReference type="InterPro" id="IPR014722">
    <property type="entry name" value="Rib_uL2_dom2"/>
</dbReference>
<dbReference type="InterPro" id="IPR002171">
    <property type="entry name" value="Ribosomal_uL2"/>
</dbReference>
<dbReference type="InterPro" id="IPR005880">
    <property type="entry name" value="Ribosomal_uL2_bac/org-type"/>
</dbReference>
<dbReference type="InterPro" id="IPR022669">
    <property type="entry name" value="Ribosomal_uL2_C"/>
</dbReference>
<dbReference type="InterPro" id="IPR022671">
    <property type="entry name" value="Ribosomal_uL2_CS"/>
</dbReference>
<dbReference type="InterPro" id="IPR014726">
    <property type="entry name" value="Ribosomal_uL2_dom3"/>
</dbReference>
<dbReference type="InterPro" id="IPR022666">
    <property type="entry name" value="Ribosomal_uL2_RNA-bd_dom"/>
</dbReference>
<dbReference type="InterPro" id="IPR008991">
    <property type="entry name" value="Translation_prot_SH3-like_sf"/>
</dbReference>
<dbReference type="NCBIfam" id="TIGR01171">
    <property type="entry name" value="rplB_bact"/>
    <property type="match status" value="1"/>
</dbReference>
<dbReference type="PANTHER" id="PTHR13691:SF5">
    <property type="entry name" value="LARGE RIBOSOMAL SUBUNIT PROTEIN UL2M"/>
    <property type="match status" value="1"/>
</dbReference>
<dbReference type="PANTHER" id="PTHR13691">
    <property type="entry name" value="RIBOSOMAL PROTEIN L2"/>
    <property type="match status" value="1"/>
</dbReference>
<dbReference type="Pfam" id="PF00181">
    <property type="entry name" value="Ribosomal_L2"/>
    <property type="match status" value="1"/>
</dbReference>
<dbReference type="Pfam" id="PF03947">
    <property type="entry name" value="Ribosomal_L2_C"/>
    <property type="match status" value="1"/>
</dbReference>
<dbReference type="PIRSF" id="PIRSF002158">
    <property type="entry name" value="Ribosomal_L2"/>
    <property type="match status" value="1"/>
</dbReference>
<dbReference type="SMART" id="SM01383">
    <property type="entry name" value="Ribosomal_L2"/>
    <property type="match status" value="1"/>
</dbReference>
<dbReference type="SMART" id="SM01382">
    <property type="entry name" value="Ribosomal_L2_C"/>
    <property type="match status" value="1"/>
</dbReference>
<dbReference type="SUPFAM" id="SSF50249">
    <property type="entry name" value="Nucleic acid-binding proteins"/>
    <property type="match status" value="1"/>
</dbReference>
<dbReference type="SUPFAM" id="SSF50104">
    <property type="entry name" value="Translation proteins SH3-like domain"/>
    <property type="match status" value="1"/>
</dbReference>
<dbReference type="PROSITE" id="PS00467">
    <property type="entry name" value="RIBOSOMAL_L2"/>
    <property type="match status" value="1"/>
</dbReference>
<feature type="chain" id="PRO_0000237238" description="Large ribosomal subunit protein uL2">
    <location>
        <begin position="1"/>
        <end position="273"/>
    </location>
</feature>
<feature type="region of interest" description="Disordered" evidence="2">
    <location>
        <begin position="28"/>
        <end position="53"/>
    </location>
</feature>
<feature type="region of interest" description="Disordered" evidence="2">
    <location>
        <begin position="221"/>
        <end position="273"/>
    </location>
</feature>
<feature type="compositionally biased region" description="Low complexity" evidence="2">
    <location>
        <begin position="39"/>
        <end position="48"/>
    </location>
</feature>